<keyword id="KW-0027">Amidation</keyword>
<keyword id="KW-0878">Amphibian defense peptide</keyword>
<keyword id="KW-0044">Antibiotic</keyword>
<keyword id="KW-0929">Antimicrobial</keyword>
<keyword id="KW-0204">Cytolysis</keyword>
<keyword id="KW-0903">Direct protein sequencing</keyword>
<keyword id="KW-0354">Hemolysis</keyword>
<keyword id="KW-0964">Secreted</keyword>
<name>DMS1_PHYTS</name>
<sequence length="29" mass="2954">GLWSKIKETGKEAAKAAGKAALNKIAEAV</sequence>
<accession>P84921</accession>
<proteinExistence type="evidence at protein level"/>
<protein>
    <recommendedName>
        <fullName evidence="3">Dermaseptin-1</fullName>
        <shortName evidence="3">DStar 01</shortName>
    </recommendedName>
</protein>
<evidence type="ECO:0000255" key="1"/>
<evidence type="ECO:0000269" key="2">
    <source ref="1"/>
</evidence>
<evidence type="ECO:0000303" key="3">
    <source ref="1"/>
</evidence>
<evidence type="ECO:0000305" key="4"/>
<comment type="function">
    <text evidence="2">Antimicrobial peptide, active against the Gram-positive bacterium S.aureus, the Gram-negative bacteria E.coli and P.aeruginosa, and the yeasts C.albicans and P.brasiliensis. Has hemolytic activity (40% hemolysis at 128 ug/ml).</text>
</comment>
<comment type="subcellular location">
    <subcellularLocation>
        <location evidence="2">Secreted</location>
    </subcellularLocation>
</comment>
<comment type="tissue specificity">
    <text evidence="2">Expressed by the skin glands.</text>
</comment>
<comment type="mass spectrometry" mass="2952.7" error="0.1" method="MALDI" evidence="2"/>
<comment type="similarity">
    <text evidence="1">Belongs to the frog skin active peptide (FSAP) family. Dermaseptin subfamily.</text>
</comment>
<organism>
    <name type="scientific">Phyllomedusa tarsius</name>
    <name type="common">Brownbelly leaf frog</name>
    <name type="synonym">Phyllomedusa tarsia</name>
    <dbReference type="NCBI Taxonomy" id="306084"/>
    <lineage>
        <taxon>Eukaryota</taxon>
        <taxon>Metazoa</taxon>
        <taxon>Chordata</taxon>
        <taxon>Craniata</taxon>
        <taxon>Vertebrata</taxon>
        <taxon>Euteleostomi</taxon>
        <taxon>Amphibia</taxon>
        <taxon>Batrachia</taxon>
        <taxon>Anura</taxon>
        <taxon>Neobatrachia</taxon>
        <taxon>Hyloidea</taxon>
        <taxon>Hylidae</taxon>
        <taxon>Phyllomedusinae</taxon>
        <taxon>Phyllomedusa</taxon>
    </lineage>
</organism>
<dbReference type="SMR" id="P84921"/>
<dbReference type="GO" id="GO:0005576">
    <property type="term" value="C:extracellular region"/>
    <property type="evidence" value="ECO:0007669"/>
    <property type="project" value="UniProtKB-SubCell"/>
</dbReference>
<dbReference type="GO" id="GO:0042742">
    <property type="term" value="P:defense response to bacterium"/>
    <property type="evidence" value="ECO:0007669"/>
    <property type="project" value="UniProtKB-KW"/>
</dbReference>
<dbReference type="GO" id="GO:0031640">
    <property type="term" value="P:killing of cells of another organism"/>
    <property type="evidence" value="ECO:0007669"/>
    <property type="project" value="UniProtKB-KW"/>
</dbReference>
<dbReference type="InterPro" id="IPR022731">
    <property type="entry name" value="Dermaseptin_dom"/>
</dbReference>
<dbReference type="Pfam" id="PF12121">
    <property type="entry name" value="DD_K"/>
    <property type="match status" value="1"/>
</dbReference>
<feature type="peptide" id="PRO_0000376033" description="Dermaseptin-1" evidence="2">
    <location>
        <begin position="1"/>
        <end position="29"/>
    </location>
</feature>
<feature type="modified residue" description="Valine amide" evidence="2">
    <location>
        <position position="29"/>
    </location>
</feature>
<reference evidence="4" key="1">
    <citation type="submission" date="2006-08" db="UniProtKB">
        <title>Dermaseptins and phylloseptins from Phyllomedusa tarsius (Amphibia).</title>
        <authorList>
            <person name="Prates M.V."/>
            <person name="Jardim D.P."/>
            <person name="Silva L.P."/>
            <person name="Gordo M."/>
            <person name="Leite J.R.S.A."/>
            <person name="Figueredo R.C.R."/>
            <person name="Amaral A.C."/>
            <person name="Felipe M.S.S."/>
            <person name="Bloch C. Jr."/>
        </authorList>
    </citation>
    <scope>PROTEIN SEQUENCE</scope>
    <scope>FUNCTION</scope>
    <scope>SUBCELLULAR LOCATION</scope>
    <scope>TISSUE SPECIFICITY</scope>
    <scope>MASS SPECTROMETRY</scope>
    <scope>AMIDATION AT VAL-29</scope>
    <source>
        <tissue evidence="2">Skin secretion</tissue>
    </source>
</reference>